<keyword id="KW-0067">ATP-binding</keyword>
<keyword id="KW-0444">Lipid biosynthesis</keyword>
<keyword id="KW-0443">Lipid metabolism</keyword>
<keyword id="KW-0496">Mitochondrion</keyword>
<keyword id="KW-0547">Nucleotide-binding</keyword>
<keyword id="KW-0594">Phospholipid biosynthesis</keyword>
<keyword id="KW-1208">Phospholipid metabolism</keyword>
<keyword id="KW-0597">Phosphoprotein</keyword>
<keyword id="KW-1185">Reference proteome</keyword>
<keyword id="KW-0677">Repeat</keyword>
<keyword id="KW-0808">Transferase</keyword>
<keyword id="KW-0809">Transit peptide</keyword>
<sequence length="553" mass="62489">MAAPAAGPVFWRRLLGLLPGRPGLAALLGRLSDRLGRSRERRRRRSPWLLLAPLLSPTVPQVTSPPCCLCPEGVHRFQWIRNLVPEFGVSSSHVRVLSSPAEFFELMKGQIKIAKRRVVMASLYLGTGPLEQELVDCLESSLEKSLQAKFPSDLKVSILLDFTRGSRGRKNSRTMLLPLLQRFPERVRVSLFHTPNLRGLLRLLIPERFNETIGLQHIKVYLFDNNVILSGANLSDSYFTNRQDRYVFLQDCAEIADFFTELVDAVGDVSLQLQGDDTVEVVDGMVHPYKGDRAAYCRAANKRVMDVIHSARARQQMLHAQTFHSDSLLSQEEAAAAGDRRPAPDTWIYPLIQMKPFEIQIDEIVTETLLTEAERGAKVFLTTGYFNLTQAYMDLVLGTRAEYQILLASPEVNGFFGAKGVAGAIPAAYVHIERQFYSEVCSLGQQDRVQLQEYWRRGWTFHAKGLWLYLAGSSLPCLTLIGSPNFGYRSVHRDLEAQIAIVTESRSLQQQLHQEQEQLYLRSGVVTSATFEQPGRQVKLWVKMVTPLIKNFF</sequence>
<proteinExistence type="evidence at protein level"/>
<evidence type="ECO:0000250" key="1"/>
<evidence type="ECO:0000255" key="2"/>
<evidence type="ECO:0000255" key="3">
    <source>
        <dbReference type="PROSITE-ProRule" id="PRU00153"/>
    </source>
</evidence>
<evidence type="ECO:0000269" key="4">
    <source>
    </source>
</evidence>
<evidence type="ECO:0000305" key="5"/>
<evidence type="ECO:0007744" key="6">
    <source>
    </source>
</evidence>
<name>PGPS1_MOUSE</name>
<accession>Q8BHF7</accession>
<accession>Q8QZT9</accession>
<accession>Q8R4R7</accession>
<organism>
    <name type="scientific">Mus musculus</name>
    <name type="common">Mouse</name>
    <dbReference type="NCBI Taxonomy" id="10090"/>
    <lineage>
        <taxon>Eukaryota</taxon>
        <taxon>Metazoa</taxon>
        <taxon>Chordata</taxon>
        <taxon>Craniata</taxon>
        <taxon>Vertebrata</taxon>
        <taxon>Euteleostomi</taxon>
        <taxon>Mammalia</taxon>
        <taxon>Eutheria</taxon>
        <taxon>Euarchontoglires</taxon>
        <taxon>Glires</taxon>
        <taxon>Rodentia</taxon>
        <taxon>Myomorpha</taxon>
        <taxon>Muroidea</taxon>
        <taxon>Muridae</taxon>
        <taxon>Murinae</taxon>
        <taxon>Mus</taxon>
        <taxon>Mus</taxon>
    </lineage>
</organism>
<comment type="function">
    <text evidence="1">Functions in the biosynthesis of the anionic phospholipids phosphatidylglycerol and cardiolipin.</text>
</comment>
<comment type="catalytic activity">
    <reaction>
        <text>a CDP-1,2-diacyl-sn-glycerol + sn-glycerol 3-phosphate = a 1,2-diacyl-sn-glycero-3-phospho-(1'-sn-glycero-3'-phosphate) + CMP + H(+)</text>
        <dbReference type="Rhea" id="RHEA:12593"/>
        <dbReference type="ChEBI" id="CHEBI:15378"/>
        <dbReference type="ChEBI" id="CHEBI:57597"/>
        <dbReference type="ChEBI" id="CHEBI:58332"/>
        <dbReference type="ChEBI" id="CHEBI:60110"/>
        <dbReference type="ChEBI" id="CHEBI:60377"/>
        <dbReference type="EC" id="2.7.8.5"/>
    </reaction>
</comment>
<comment type="activity regulation">
    <text evidence="1">Activated by calcium and magnesium and inhibited by other bivalent cations.</text>
</comment>
<comment type="pathway">
    <text>Phospholipid metabolism; phosphatidylglycerol biosynthesis; phosphatidylglycerol from CDP-diacylglycerol: step 1/2.</text>
</comment>
<comment type="subcellular location">
    <subcellularLocation>
        <location evidence="1">Mitochondrion</location>
    </subcellularLocation>
</comment>
<comment type="tissue specificity">
    <text evidence="4">Widely expressed with higher expression in testis, liver and brain.</text>
</comment>
<comment type="similarity">
    <text evidence="5">Belongs to the CDP-alcohol phosphatidyltransferase class-II family.</text>
</comment>
<comment type="sequence caution" evidence="5">
    <conflict type="erroneous initiation">
        <sequence resource="EMBL-CDS" id="AAH22918"/>
    </conflict>
</comment>
<comment type="sequence caution" evidence="5">
    <conflict type="miscellaneous discrepancy">
        <sequence resource="EMBL-CDS" id="AAL87040"/>
    </conflict>
    <text>Contaminating sequence. Sequence of unknown origin in the N-terminal part.</text>
</comment>
<feature type="transit peptide" description="Mitochondrion" evidence="2">
    <location>
        <begin position="1"/>
        <end position="25"/>
    </location>
</feature>
<feature type="chain" id="PRO_0000337107" description="CDP-diacylglycerol--glycerol-3-phosphate 3-phosphatidyltransferase, mitochondrial">
    <location>
        <begin position="26"/>
        <end position="553"/>
    </location>
</feature>
<feature type="domain" description="PLD phosphodiesterase 1" evidence="3">
    <location>
        <begin position="212"/>
        <end position="238"/>
    </location>
</feature>
<feature type="domain" description="PLD phosphodiesterase 2" evidence="3">
    <location>
        <begin position="457"/>
        <end position="490"/>
    </location>
</feature>
<feature type="active site" evidence="3">
    <location>
        <position position="217"/>
    </location>
</feature>
<feature type="active site" evidence="3">
    <location>
        <position position="219"/>
    </location>
</feature>
<feature type="active site" evidence="3">
    <location>
        <position position="224"/>
    </location>
</feature>
<feature type="binding site" evidence="2">
    <location>
        <begin position="121"/>
        <end position="128"/>
    </location>
    <ligand>
        <name>ATP</name>
        <dbReference type="ChEBI" id="CHEBI:30616"/>
    </ligand>
</feature>
<feature type="modified residue" description="Phosphoserine" evidence="6">
    <location>
        <position position="46"/>
    </location>
</feature>
<feature type="sequence conflict" description="In Ref. 4; AAH22918." evidence="5" ref="4">
    <original>T</original>
    <variation>M</variation>
    <location>
        <position position="371"/>
    </location>
</feature>
<dbReference type="EC" id="2.7.8.5"/>
<dbReference type="EMBL" id="AK046174">
    <property type="protein sequence ID" value="BAC32619.1"/>
    <property type="molecule type" value="mRNA"/>
</dbReference>
<dbReference type="EMBL" id="AK049359">
    <property type="protein sequence ID" value="BAC33708.1"/>
    <property type="molecule type" value="mRNA"/>
</dbReference>
<dbReference type="EMBL" id="AK053905">
    <property type="protein sequence ID" value="BAC35584.1"/>
    <property type="molecule type" value="mRNA"/>
</dbReference>
<dbReference type="EMBL" id="AL591433">
    <property type="status" value="NOT_ANNOTATED_CDS"/>
    <property type="molecule type" value="Genomic_DNA"/>
</dbReference>
<dbReference type="EMBL" id="AF411101">
    <property type="protein sequence ID" value="AAL87040.1"/>
    <property type="status" value="ALT_SEQ"/>
    <property type="molecule type" value="mRNA"/>
</dbReference>
<dbReference type="EMBL" id="BC022918">
    <property type="protein sequence ID" value="AAH22918.1"/>
    <property type="status" value="ALT_INIT"/>
    <property type="molecule type" value="mRNA"/>
</dbReference>
<dbReference type="CCDS" id="CCDS25698.1"/>
<dbReference type="RefSeq" id="NP_598518.1">
    <property type="nucleotide sequence ID" value="NM_133757.2"/>
</dbReference>
<dbReference type="SMR" id="Q8BHF7"/>
<dbReference type="BioGRID" id="216759">
    <property type="interactions" value="2"/>
</dbReference>
<dbReference type="FunCoup" id="Q8BHF7">
    <property type="interactions" value="3599"/>
</dbReference>
<dbReference type="STRING" id="10090.ENSMUSP00000121973"/>
<dbReference type="iPTMnet" id="Q8BHF7"/>
<dbReference type="PhosphoSitePlus" id="Q8BHF7"/>
<dbReference type="SwissPalm" id="Q8BHF7"/>
<dbReference type="PaxDb" id="10090-ENSMUSP00000121973"/>
<dbReference type="ProteomicsDB" id="287921"/>
<dbReference type="Pumba" id="Q8BHF7"/>
<dbReference type="Antibodypedia" id="9930">
    <property type="antibodies" value="158 antibodies from 22 providers"/>
</dbReference>
<dbReference type="DNASU" id="74451"/>
<dbReference type="Ensembl" id="ENSMUST00000132676.8">
    <property type="protein sequence ID" value="ENSMUSP00000121973.2"/>
    <property type="gene ID" value="ENSMUSG00000017715.12"/>
</dbReference>
<dbReference type="GeneID" id="74451"/>
<dbReference type="KEGG" id="mmu:74451"/>
<dbReference type="UCSC" id="uc007moj.1">
    <property type="organism name" value="mouse"/>
</dbReference>
<dbReference type="AGR" id="MGI:1921701"/>
<dbReference type="CTD" id="9489"/>
<dbReference type="MGI" id="MGI:1921701">
    <property type="gene designation" value="Pgs1"/>
</dbReference>
<dbReference type="VEuPathDB" id="HostDB:ENSMUSG00000017715"/>
<dbReference type="eggNOG" id="KOG3964">
    <property type="taxonomic scope" value="Eukaryota"/>
</dbReference>
<dbReference type="GeneTree" id="ENSGT00390000002373"/>
<dbReference type="HOGENOM" id="CLU_030471_1_2_1"/>
<dbReference type="InParanoid" id="Q8BHF7"/>
<dbReference type="OMA" id="HKCLAQC"/>
<dbReference type="OrthoDB" id="10250191at2759"/>
<dbReference type="PhylomeDB" id="Q8BHF7"/>
<dbReference type="TreeFam" id="TF314768"/>
<dbReference type="UniPathway" id="UPA00084">
    <property type="reaction ID" value="UER00503"/>
</dbReference>
<dbReference type="BioGRID-ORCS" id="74451">
    <property type="hits" value="26 hits in 79 CRISPR screens"/>
</dbReference>
<dbReference type="ChiTaRS" id="Pgs1">
    <property type="organism name" value="mouse"/>
</dbReference>
<dbReference type="PRO" id="PR:Q8BHF7"/>
<dbReference type="Proteomes" id="UP000000589">
    <property type="component" value="Chromosome 11"/>
</dbReference>
<dbReference type="RNAct" id="Q8BHF7">
    <property type="molecule type" value="protein"/>
</dbReference>
<dbReference type="Bgee" id="ENSMUSG00000017715">
    <property type="expression patterns" value="Expressed in primary oocyte and 257 other cell types or tissues"/>
</dbReference>
<dbReference type="ExpressionAtlas" id="Q8BHF7">
    <property type="expression patterns" value="baseline and differential"/>
</dbReference>
<dbReference type="GO" id="GO:0005789">
    <property type="term" value="C:endoplasmic reticulum membrane"/>
    <property type="evidence" value="ECO:0007669"/>
    <property type="project" value="UniProtKB-ARBA"/>
</dbReference>
<dbReference type="GO" id="GO:0005739">
    <property type="term" value="C:mitochondrion"/>
    <property type="evidence" value="ECO:0007005"/>
    <property type="project" value="MGI"/>
</dbReference>
<dbReference type="GO" id="GO:0005524">
    <property type="term" value="F:ATP binding"/>
    <property type="evidence" value="ECO:0007669"/>
    <property type="project" value="UniProtKB-KW"/>
</dbReference>
<dbReference type="GO" id="GO:0008444">
    <property type="term" value="F:CDP-diacylglycerol-glycerol-3-phosphate 3-phosphatidyltransferase activity"/>
    <property type="evidence" value="ECO:0000250"/>
    <property type="project" value="HGNC-UCL"/>
</dbReference>
<dbReference type="GO" id="GO:0016788">
    <property type="term" value="F:hydrolase activity, acting on ester bonds"/>
    <property type="evidence" value="ECO:0007669"/>
    <property type="project" value="UniProtKB-ARBA"/>
</dbReference>
<dbReference type="GO" id="GO:0032049">
    <property type="term" value="P:cardiolipin biosynthetic process"/>
    <property type="evidence" value="ECO:0000250"/>
    <property type="project" value="BHF-UCL"/>
</dbReference>
<dbReference type="GO" id="GO:0046339">
    <property type="term" value="P:diacylglycerol metabolic process"/>
    <property type="evidence" value="ECO:0000250"/>
    <property type="project" value="BHF-UCL"/>
</dbReference>
<dbReference type="GO" id="GO:0006655">
    <property type="term" value="P:phosphatidylglycerol biosynthetic process"/>
    <property type="evidence" value="ECO:0000250"/>
    <property type="project" value="BHF-UCL"/>
</dbReference>
<dbReference type="GO" id="GO:0008654">
    <property type="term" value="P:phospholipid biosynthetic process"/>
    <property type="evidence" value="ECO:0000250"/>
    <property type="project" value="HGNC-UCL"/>
</dbReference>
<dbReference type="CDD" id="cd09135">
    <property type="entry name" value="PLDc_PGS1_euk_1"/>
    <property type="match status" value="1"/>
</dbReference>
<dbReference type="CDD" id="cd09137">
    <property type="entry name" value="PLDc_PGS1_euk_2"/>
    <property type="match status" value="1"/>
</dbReference>
<dbReference type="FunFam" id="3.30.870.10:FF:000023">
    <property type="entry name" value="CDP-diacylglycerol--glycerol-3-phosphate 3-phosphatidyltransferase"/>
    <property type="match status" value="1"/>
</dbReference>
<dbReference type="FunFam" id="3.30.870.10:FF:000026">
    <property type="entry name" value="CDP-diacylglycerol--glycerol-3-phosphate 3-phosphatidyltransferase"/>
    <property type="match status" value="1"/>
</dbReference>
<dbReference type="Gene3D" id="3.30.870.10">
    <property type="entry name" value="Endonuclease Chain A"/>
    <property type="match status" value="2"/>
</dbReference>
<dbReference type="InterPro" id="IPR016270">
    <property type="entry name" value="PGS1"/>
</dbReference>
<dbReference type="InterPro" id="IPR001736">
    <property type="entry name" value="PLipase_D/transphosphatidylase"/>
</dbReference>
<dbReference type="PANTHER" id="PTHR12586:SF1">
    <property type="entry name" value="CDP-DIACYLGLYCEROL--GLYCEROL-3-PHOSPHATE 3-PHOSPHATIDYLTRANSFERASE, MITOCHONDRIAL"/>
    <property type="match status" value="1"/>
</dbReference>
<dbReference type="PANTHER" id="PTHR12586">
    <property type="entry name" value="CDP-DIACYLGLYCEROL--SERINE O-PHOSPHATIDYLTRANSFERASE"/>
    <property type="match status" value="1"/>
</dbReference>
<dbReference type="PIRSF" id="PIRSF000850">
    <property type="entry name" value="Phospholipase_D_PSS"/>
    <property type="match status" value="1"/>
</dbReference>
<dbReference type="SUPFAM" id="SSF56024">
    <property type="entry name" value="Phospholipase D/nuclease"/>
    <property type="match status" value="1"/>
</dbReference>
<dbReference type="PROSITE" id="PS50035">
    <property type="entry name" value="PLD"/>
    <property type="match status" value="1"/>
</dbReference>
<reference key="1">
    <citation type="journal article" date="2005" name="Science">
        <title>The transcriptional landscape of the mammalian genome.</title>
        <authorList>
            <person name="Carninci P."/>
            <person name="Kasukawa T."/>
            <person name="Katayama S."/>
            <person name="Gough J."/>
            <person name="Frith M.C."/>
            <person name="Maeda N."/>
            <person name="Oyama R."/>
            <person name="Ravasi T."/>
            <person name="Lenhard B."/>
            <person name="Wells C."/>
            <person name="Kodzius R."/>
            <person name="Shimokawa K."/>
            <person name="Bajic V.B."/>
            <person name="Brenner S.E."/>
            <person name="Batalov S."/>
            <person name="Forrest A.R."/>
            <person name="Zavolan M."/>
            <person name="Davis M.J."/>
            <person name="Wilming L.G."/>
            <person name="Aidinis V."/>
            <person name="Allen J.E."/>
            <person name="Ambesi-Impiombato A."/>
            <person name="Apweiler R."/>
            <person name="Aturaliya R.N."/>
            <person name="Bailey T.L."/>
            <person name="Bansal M."/>
            <person name="Baxter L."/>
            <person name="Beisel K.W."/>
            <person name="Bersano T."/>
            <person name="Bono H."/>
            <person name="Chalk A.M."/>
            <person name="Chiu K.P."/>
            <person name="Choudhary V."/>
            <person name="Christoffels A."/>
            <person name="Clutterbuck D.R."/>
            <person name="Crowe M.L."/>
            <person name="Dalla E."/>
            <person name="Dalrymple B.P."/>
            <person name="de Bono B."/>
            <person name="Della Gatta G."/>
            <person name="di Bernardo D."/>
            <person name="Down T."/>
            <person name="Engstrom P."/>
            <person name="Fagiolini M."/>
            <person name="Faulkner G."/>
            <person name="Fletcher C.F."/>
            <person name="Fukushima T."/>
            <person name="Furuno M."/>
            <person name="Futaki S."/>
            <person name="Gariboldi M."/>
            <person name="Georgii-Hemming P."/>
            <person name="Gingeras T.R."/>
            <person name="Gojobori T."/>
            <person name="Green R.E."/>
            <person name="Gustincich S."/>
            <person name="Harbers M."/>
            <person name="Hayashi Y."/>
            <person name="Hensch T.K."/>
            <person name="Hirokawa N."/>
            <person name="Hill D."/>
            <person name="Huminiecki L."/>
            <person name="Iacono M."/>
            <person name="Ikeo K."/>
            <person name="Iwama A."/>
            <person name="Ishikawa T."/>
            <person name="Jakt M."/>
            <person name="Kanapin A."/>
            <person name="Katoh M."/>
            <person name="Kawasawa Y."/>
            <person name="Kelso J."/>
            <person name="Kitamura H."/>
            <person name="Kitano H."/>
            <person name="Kollias G."/>
            <person name="Krishnan S.P."/>
            <person name="Kruger A."/>
            <person name="Kummerfeld S.K."/>
            <person name="Kurochkin I.V."/>
            <person name="Lareau L.F."/>
            <person name="Lazarevic D."/>
            <person name="Lipovich L."/>
            <person name="Liu J."/>
            <person name="Liuni S."/>
            <person name="McWilliam S."/>
            <person name="Madan Babu M."/>
            <person name="Madera M."/>
            <person name="Marchionni L."/>
            <person name="Matsuda H."/>
            <person name="Matsuzawa S."/>
            <person name="Miki H."/>
            <person name="Mignone F."/>
            <person name="Miyake S."/>
            <person name="Morris K."/>
            <person name="Mottagui-Tabar S."/>
            <person name="Mulder N."/>
            <person name="Nakano N."/>
            <person name="Nakauchi H."/>
            <person name="Ng P."/>
            <person name="Nilsson R."/>
            <person name="Nishiguchi S."/>
            <person name="Nishikawa S."/>
            <person name="Nori F."/>
            <person name="Ohara O."/>
            <person name="Okazaki Y."/>
            <person name="Orlando V."/>
            <person name="Pang K.C."/>
            <person name="Pavan W.J."/>
            <person name="Pavesi G."/>
            <person name="Pesole G."/>
            <person name="Petrovsky N."/>
            <person name="Piazza S."/>
            <person name="Reed J."/>
            <person name="Reid J.F."/>
            <person name="Ring B.Z."/>
            <person name="Ringwald M."/>
            <person name="Rost B."/>
            <person name="Ruan Y."/>
            <person name="Salzberg S.L."/>
            <person name="Sandelin A."/>
            <person name="Schneider C."/>
            <person name="Schoenbach C."/>
            <person name="Sekiguchi K."/>
            <person name="Semple C.A."/>
            <person name="Seno S."/>
            <person name="Sessa L."/>
            <person name="Sheng Y."/>
            <person name="Shibata Y."/>
            <person name="Shimada H."/>
            <person name="Shimada K."/>
            <person name="Silva D."/>
            <person name="Sinclair B."/>
            <person name="Sperling S."/>
            <person name="Stupka E."/>
            <person name="Sugiura K."/>
            <person name="Sultana R."/>
            <person name="Takenaka Y."/>
            <person name="Taki K."/>
            <person name="Tammoja K."/>
            <person name="Tan S.L."/>
            <person name="Tang S."/>
            <person name="Taylor M.S."/>
            <person name="Tegner J."/>
            <person name="Teichmann S.A."/>
            <person name="Ueda H.R."/>
            <person name="van Nimwegen E."/>
            <person name="Verardo R."/>
            <person name="Wei C.L."/>
            <person name="Yagi K."/>
            <person name="Yamanishi H."/>
            <person name="Zabarovsky E."/>
            <person name="Zhu S."/>
            <person name="Zimmer A."/>
            <person name="Hide W."/>
            <person name="Bult C."/>
            <person name="Grimmond S.M."/>
            <person name="Teasdale R.D."/>
            <person name="Liu E.T."/>
            <person name="Brusic V."/>
            <person name="Quackenbush J."/>
            <person name="Wahlestedt C."/>
            <person name="Mattick J.S."/>
            <person name="Hume D.A."/>
            <person name="Kai C."/>
            <person name="Sasaki D."/>
            <person name="Tomaru Y."/>
            <person name="Fukuda S."/>
            <person name="Kanamori-Katayama M."/>
            <person name="Suzuki M."/>
            <person name="Aoki J."/>
            <person name="Arakawa T."/>
            <person name="Iida J."/>
            <person name="Imamura K."/>
            <person name="Itoh M."/>
            <person name="Kato T."/>
            <person name="Kawaji H."/>
            <person name="Kawagashira N."/>
            <person name="Kawashima T."/>
            <person name="Kojima M."/>
            <person name="Kondo S."/>
            <person name="Konno H."/>
            <person name="Nakano K."/>
            <person name="Ninomiya N."/>
            <person name="Nishio T."/>
            <person name="Okada M."/>
            <person name="Plessy C."/>
            <person name="Shibata K."/>
            <person name="Shiraki T."/>
            <person name="Suzuki S."/>
            <person name="Tagami M."/>
            <person name="Waki K."/>
            <person name="Watahiki A."/>
            <person name="Okamura-Oho Y."/>
            <person name="Suzuki H."/>
            <person name="Kawai J."/>
            <person name="Hayashizaki Y."/>
        </authorList>
    </citation>
    <scope>NUCLEOTIDE SEQUENCE [LARGE SCALE MRNA]</scope>
    <source>
        <strain>C57BL/6J</strain>
        <tissue>Corpora quadrigemina</tissue>
        <tissue>Embryonic stem cell</tissue>
        <tissue>Eye</tissue>
    </source>
</reference>
<reference key="2">
    <citation type="journal article" date="2009" name="PLoS Biol.">
        <title>Lineage-specific biology revealed by a finished genome assembly of the mouse.</title>
        <authorList>
            <person name="Church D.M."/>
            <person name="Goodstadt L."/>
            <person name="Hillier L.W."/>
            <person name="Zody M.C."/>
            <person name="Goldstein S."/>
            <person name="She X."/>
            <person name="Bult C.J."/>
            <person name="Agarwala R."/>
            <person name="Cherry J.L."/>
            <person name="DiCuccio M."/>
            <person name="Hlavina W."/>
            <person name="Kapustin Y."/>
            <person name="Meric P."/>
            <person name="Maglott D."/>
            <person name="Birtle Z."/>
            <person name="Marques A.C."/>
            <person name="Graves T."/>
            <person name="Zhou S."/>
            <person name="Teague B."/>
            <person name="Potamousis K."/>
            <person name="Churas C."/>
            <person name="Place M."/>
            <person name="Herschleb J."/>
            <person name="Runnheim R."/>
            <person name="Forrest D."/>
            <person name="Amos-Landgraf J."/>
            <person name="Schwartz D.C."/>
            <person name="Cheng Z."/>
            <person name="Lindblad-Toh K."/>
            <person name="Eichler E.E."/>
            <person name="Ponting C.P."/>
        </authorList>
    </citation>
    <scope>NUCLEOTIDE SEQUENCE [LARGE SCALE GENOMIC DNA]</scope>
    <source>
        <strain>C57BL/6J</strain>
    </source>
</reference>
<reference key="3">
    <citation type="submission" date="2001-08" db="EMBL/GenBank/DDBJ databases">
        <authorList>
            <person name="Siu G."/>
            <person name="Arsov I."/>
        </authorList>
    </citation>
    <scope>NUCLEOTIDE SEQUENCE [MRNA] OF 47-553</scope>
    <source>
        <strain>BALB/cJ</strain>
        <tissue>Thymus</tissue>
    </source>
</reference>
<reference key="4">
    <citation type="journal article" date="2004" name="Genome Res.">
        <title>The status, quality, and expansion of the NIH full-length cDNA project: the Mammalian Gene Collection (MGC).</title>
        <authorList>
            <consortium name="The MGC Project Team"/>
        </authorList>
    </citation>
    <scope>NUCLEOTIDE SEQUENCE [LARGE SCALE MRNA] OF 286-553</scope>
    <source>
        <strain>FVB/N</strain>
        <tissue>Salivary gland</tissue>
    </source>
</reference>
<reference key="5">
    <citation type="journal article" date="1999" name="J. Biol. Chem.">
        <title>Isolation of a chinese hamster ovary (CHO) cDNA encoding phosphatidylglycerophosphate (PGP) synthase, expression of which corrects the mitochondrial abnormalities of a PGP synthase-defective mutant of CHO-K1 cells.</title>
        <authorList>
            <person name="Kawasaki K."/>
            <person name="Kuge O."/>
            <person name="Chang S.-C."/>
            <person name="Heacock P.N."/>
            <person name="Rho M."/>
            <person name="Suzuki K."/>
            <person name="Nishijima M."/>
            <person name="Dowhan W."/>
        </authorList>
    </citation>
    <scope>TISSUE SPECIFICITY</scope>
</reference>
<reference key="6">
    <citation type="journal article" date="2010" name="Cell">
        <title>A tissue-specific atlas of mouse protein phosphorylation and expression.</title>
        <authorList>
            <person name="Huttlin E.L."/>
            <person name="Jedrychowski M.P."/>
            <person name="Elias J.E."/>
            <person name="Goswami T."/>
            <person name="Rad R."/>
            <person name="Beausoleil S.A."/>
            <person name="Villen J."/>
            <person name="Haas W."/>
            <person name="Sowa M.E."/>
            <person name="Gygi S.P."/>
        </authorList>
    </citation>
    <scope>PHOSPHORYLATION [LARGE SCALE ANALYSIS] AT SER-46</scope>
    <scope>IDENTIFICATION BY MASS SPECTROMETRY [LARGE SCALE ANALYSIS]</scope>
    <source>
        <tissue>Brain</tissue>
        <tissue>Pancreas</tissue>
        <tissue>Testis</tissue>
    </source>
</reference>
<gene>
    <name type="primary">Pgs1</name>
    <name type="synonym">Saf</name>
</gene>
<protein>
    <recommendedName>
        <fullName>CDP-diacylglycerol--glycerol-3-phosphate 3-phosphatidyltransferase, mitochondrial</fullName>
        <ecNumber>2.7.8.5</ecNumber>
    </recommendedName>
    <alternativeName>
        <fullName>Phosphatidylglycerophosphate synthase 1</fullName>
        <shortName>PGP synthase 1</shortName>
    </alternativeName>
    <alternativeName>
        <fullName>Silencer-associated factor</fullName>
    </alternativeName>
</protein>